<reference key="1">
    <citation type="submission" date="1995-10" db="EMBL/GenBank/DDBJ databases">
        <authorList>
            <person name="Delius H."/>
        </authorList>
    </citation>
    <scope>NUCLEOTIDE SEQUENCE [GENOMIC DNA]</scope>
</reference>
<proteinExistence type="inferred from homology"/>
<dbReference type="EMBL" id="U37488">
    <property type="protein sequence ID" value="AAA79187.1"/>
    <property type="molecule type" value="Genomic_DNA"/>
</dbReference>
<dbReference type="RefSeq" id="NP_043288.1">
    <property type="nucleotide sequence ID" value="NC_001676.1"/>
</dbReference>
<dbReference type="SMR" id="Q81018"/>
<dbReference type="GeneID" id="1497432"/>
<dbReference type="KEGG" id="vg:1497432"/>
<dbReference type="OrthoDB" id="27353at10239"/>
<dbReference type="Proteomes" id="UP000007665">
    <property type="component" value="Segment"/>
</dbReference>
<dbReference type="GO" id="GO:0030430">
    <property type="term" value="C:host cell cytoplasm"/>
    <property type="evidence" value="ECO:0007669"/>
    <property type="project" value="UniProtKB-SubCell"/>
</dbReference>
<dbReference type="GO" id="GO:0042025">
    <property type="term" value="C:host cell nucleus"/>
    <property type="evidence" value="ECO:0007669"/>
    <property type="project" value="UniProtKB-SubCell"/>
</dbReference>
<dbReference type="GO" id="GO:0003677">
    <property type="term" value="F:DNA binding"/>
    <property type="evidence" value="ECO:0007669"/>
    <property type="project" value="UniProtKB-UniRule"/>
</dbReference>
<dbReference type="GO" id="GO:0008270">
    <property type="term" value="F:zinc ion binding"/>
    <property type="evidence" value="ECO:0007669"/>
    <property type="project" value="UniProtKB-KW"/>
</dbReference>
<dbReference type="GO" id="GO:0006351">
    <property type="term" value="P:DNA-templated transcription"/>
    <property type="evidence" value="ECO:0007669"/>
    <property type="project" value="UniProtKB-UniRule"/>
</dbReference>
<dbReference type="GO" id="GO:0006355">
    <property type="term" value="P:regulation of DNA-templated transcription"/>
    <property type="evidence" value="ECO:0007669"/>
    <property type="project" value="UniProtKB-UniRule"/>
</dbReference>
<dbReference type="GO" id="GO:0052150">
    <property type="term" value="P:symbiont-mediated perturbation of host apoptosis"/>
    <property type="evidence" value="ECO:0007669"/>
    <property type="project" value="UniProtKB-KW"/>
</dbReference>
<dbReference type="GO" id="GO:0039648">
    <property type="term" value="P:symbiont-mediated perturbation of host ubiquitin-like protein modification"/>
    <property type="evidence" value="ECO:0007669"/>
    <property type="project" value="UniProtKB-UniRule"/>
</dbReference>
<dbReference type="GO" id="GO:0052170">
    <property type="term" value="P:symbiont-mediated suppression of host innate immune response"/>
    <property type="evidence" value="ECO:0007669"/>
    <property type="project" value="UniProtKB-KW"/>
</dbReference>
<dbReference type="GO" id="GO:0039502">
    <property type="term" value="P:symbiont-mediated suppression of host type I interferon-mediated signaling pathway"/>
    <property type="evidence" value="ECO:0007669"/>
    <property type="project" value="UniProtKB-UniRule"/>
</dbReference>
<dbReference type="Gene3D" id="3.30.240.40">
    <property type="entry name" value="E6 early regulatory protein"/>
    <property type="match status" value="2"/>
</dbReference>
<dbReference type="HAMAP" id="MF_04006">
    <property type="entry name" value="HPV_E6"/>
    <property type="match status" value="1"/>
</dbReference>
<dbReference type="InterPro" id="IPR001334">
    <property type="entry name" value="E6"/>
</dbReference>
<dbReference type="InterPro" id="IPR038575">
    <property type="entry name" value="E6_sf"/>
</dbReference>
<dbReference type="Pfam" id="PF00518">
    <property type="entry name" value="E6"/>
    <property type="match status" value="1"/>
</dbReference>
<dbReference type="SUPFAM" id="SSF161229">
    <property type="entry name" value="E6 C-terminal domain-like"/>
    <property type="match status" value="2"/>
</dbReference>
<keyword id="KW-0010">Activator</keyword>
<keyword id="KW-0238">DNA-binding</keyword>
<keyword id="KW-0244">Early protein</keyword>
<keyword id="KW-1035">Host cytoplasm</keyword>
<keyword id="KW-1048">Host nucleus</keyword>
<keyword id="KW-0945">Host-virus interaction</keyword>
<keyword id="KW-1090">Inhibition of host innate immune response by virus</keyword>
<keyword id="KW-0479">Metal-binding</keyword>
<keyword id="KW-1119">Modulation of host cell apoptosis by virus</keyword>
<keyword id="KW-1185">Reference proteome</keyword>
<keyword id="KW-0804">Transcription</keyword>
<keyword id="KW-0805">Transcription regulation</keyword>
<keyword id="KW-0899">Viral immunoevasion</keyword>
<keyword id="KW-0862">Zinc</keyword>
<keyword id="KW-0863">Zinc-finger</keyword>
<accession>Q81018</accession>
<organismHost>
    <name type="scientific">Homo sapiens</name>
    <name type="common">Human</name>
    <dbReference type="NCBI Taxonomy" id="9606"/>
</organismHost>
<name>VE6_HPV54</name>
<feature type="chain" id="PRO_0000133371" description="Protein E6">
    <location>
        <begin position="1"/>
        <end position="144"/>
    </location>
</feature>
<feature type="zinc finger region" evidence="1">
    <location>
        <begin position="32"/>
        <end position="68"/>
    </location>
</feature>
<feature type="zinc finger region" evidence="1">
    <location>
        <begin position="105"/>
        <end position="141"/>
    </location>
</feature>
<comment type="function">
    <text evidence="1">Plays a major role in the induction and maintenance of cellular transformation. E6 associates with host UBE3A/E6-AP ubiquitin-protein ligase and modulates its activity. Sequesters tumor suppressor TP53 in the host cytoplasm and modulates its activity by interacting with host EP300 that results in the reduction of TP53 acetylation and activation. In turn, apoptosis induced by DNA damage is inhibited. E6 also protects host keratinocytes from apoptosis by mediating the degradation of host BAK1. May also inhibit host immune response.</text>
</comment>
<comment type="subunit">
    <text evidence="1">Forms homodimers. Interacts with ubiquitin-protein ligase UBE3A/E6-AP; this interaction stimulates UBE3A ubiquitin activity. Interacts with host TP53 and EP300; this interaction inhibits TP53 activity.</text>
</comment>
<comment type="subcellular location">
    <subcellularLocation>
        <location evidence="1">Host cytoplasm</location>
    </subcellularLocation>
    <subcellularLocation>
        <location evidence="1">Host nucleus</location>
    </subcellularLocation>
</comment>
<comment type="miscellaneous">
    <text evidence="1">Belongs to the low risk human alphapapillomavirus family. The cancer-causing human papillomavirus E6 protein has a unique carboxy terminal PDZ domain containing substrate but low risk E6s do not possess this domain.</text>
</comment>
<comment type="similarity">
    <text evidence="2">Belongs to the papillomaviridae E6 protein family.</text>
</comment>
<protein>
    <recommendedName>
        <fullName evidence="1">Protein E6</fullName>
    </recommendedName>
</protein>
<gene>
    <name evidence="1" type="primary">E6</name>
</gene>
<evidence type="ECO:0000255" key="1">
    <source>
        <dbReference type="HAMAP-Rule" id="MF_04006"/>
    </source>
</evidence>
<evidence type="ECO:0000305" key="2"/>
<organism>
    <name type="scientific">Human papillomavirus type 54</name>
    <dbReference type="NCBI Taxonomy" id="1671798"/>
    <lineage>
        <taxon>Viruses</taxon>
        <taxon>Monodnaviria</taxon>
        <taxon>Shotokuvirae</taxon>
        <taxon>Cossaviricota</taxon>
        <taxon>Papovaviricetes</taxon>
        <taxon>Zurhausenvirales</taxon>
        <taxon>Papillomaviridae</taxon>
        <taxon>Firstpapillomavirinae</taxon>
        <taxon>Alphapapillomavirus</taxon>
        <taxon>Alphapapillomavirus 13</taxon>
    </lineage>
</organism>
<sequence>MSATEPHTDQPRTLADLCKVCNIPMHSLQLPCAFCKKTVCTAEIYAFQYKDLFVVWRHGFPHAACALCLELHGQINYRRHRDRACLWETVEQECGKPLEEIFIRCWLCHKPLCNVEKQRHVDYNRRFHCVRGYWKGRCLHCWKP</sequence>